<evidence type="ECO:0000255" key="1">
    <source>
        <dbReference type="HAMAP-Rule" id="MF_00031"/>
    </source>
</evidence>
<reference key="1">
    <citation type="journal article" date="2007" name="J. Bacteriol.">
        <title>The complete genome sequence of the lactic acid bacterial paradigm Lactococcus lactis subsp. cremoris MG1363.</title>
        <authorList>
            <person name="Wegmann U."/>
            <person name="O'Connell-Motherway M."/>
            <person name="Zomer A."/>
            <person name="Buist G."/>
            <person name="Shearman C."/>
            <person name="Canchaya C."/>
            <person name="Ventura M."/>
            <person name="Goesmann A."/>
            <person name="Gasson M.J."/>
            <person name="Kuipers O.P."/>
            <person name="van Sinderen D."/>
            <person name="Kok J."/>
        </authorList>
    </citation>
    <scope>NUCLEOTIDE SEQUENCE [LARGE SCALE GENOMIC DNA]</scope>
    <source>
        <strain>MG1363</strain>
    </source>
</reference>
<proteinExistence type="inferred from homology"/>
<protein>
    <recommendedName>
        <fullName evidence="1">Holliday junction branch migration complex subunit RuvA</fullName>
    </recommendedName>
</protein>
<comment type="function">
    <text evidence="1">The RuvA-RuvB-RuvC complex processes Holliday junction (HJ) DNA during genetic recombination and DNA repair, while the RuvA-RuvB complex plays an important role in the rescue of blocked DNA replication forks via replication fork reversal (RFR). RuvA specifically binds to HJ cruciform DNA, conferring on it an open structure. The RuvB hexamer acts as an ATP-dependent pump, pulling dsDNA into and through the RuvAB complex. HJ branch migration allows RuvC to scan DNA until it finds its consensus sequence, where it cleaves and resolves the cruciform DNA.</text>
</comment>
<comment type="subunit">
    <text evidence="1">Homotetramer. Forms an RuvA(8)-RuvB(12)-Holliday junction (HJ) complex. HJ DNA is sandwiched between 2 RuvA tetramers; dsDNA enters through RuvA and exits via RuvB. An RuvB hexamer assembles on each DNA strand where it exits the tetramer. Each RuvB hexamer is contacted by two RuvA subunits (via domain III) on 2 adjacent RuvB subunits; this complex drives branch migration. In the full resolvosome a probable DNA-RuvA(4)-RuvB(12)-RuvC(2) complex forms which resolves the HJ.</text>
</comment>
<comment type="subcellular location">
    <subcellularLocation>
        <location evidence="1">Cytoplasm</location>
    </subcellularLocation>
</comment>
<comment type="domain">
    <text evidence="1">Has three domains with a flexible linker between the domains II and III and assumes an 'L' shape. Domain III is highly mobile and contacts RuvB.</text>
</comment>
<comment type="similarity">
    <text evidence="1">Belongs to the RuvA family.</text>
</comment>
<name>RUVA_LACLM</name>
<gene>
    <name evidence="1" type="primary">ruvA</name>
    <name type="ordered locus">llmg_2488</name>
</gene>
<feature type="chain" id="PRO_1000002472" description="Holliday junction branch migration complex subunit RuvA">
    <location>
        <begin position="1"/>
        <end position="197"/>
    </location>
</feature>
<feature type="region of interest" description="Domain I" evidence="1">
    <location>
        <begin position="1"/>
        <end position="63"/>
    </location>
</feature>
<feature type="region of interest" description="Domain II" evidence="1">
    <location>
        <begin position="64"/>
        <end position="142"/>
    </location>
</feature>
<feature type="region of interest" description="Flexible linker" evidence="1">
    <location>
        <begin position="142"/>
        <end position="146"/>
    </location>
</feature>
<feature type="region of interest" description="Domain III" evidence="1">
    <location>
        <begin position="147"/>
        <end position="197"/>
    </location>
</feature>
<dbReference type="EMBL" id="AM406671">
    <property type="protein sequence ID" value="CAL99052.1"/>
    <property type="molecule type" value="Genomic_DNA"/>
</dbReference>
<dbReference type="RefSeq" id="WP_011836117.1">
    <property type="nucleotide sequence ID" value="NC_009004.1"/>
</dbReference>
<dbReference type="SMR" id="A2RP07"/>
<dbReference type="STRING" id="416870.llmg_2488"/>
<dbReference type="KEGG" id="llm:llmg_2488"/>
<dbReference type="eggNOG" id="COG0632">
    <property type="taxonomic scope" value="Bacteria"/>
</dbReference>
<dbReference type="HOGENOM" id="CLU_087936_1_0_9"/>
<dbReference type="OrthoDB" id="5293449at2"/>
<dbReference type="PhylomeDB" id="A2RP07"/>
<dbReference type="Proteomes" id="UP000000364">
    <property type="component" value="Chromosome"/>
</dbReference>
<dbReference type="GO" id="GO:0005737">
    <property type="term" value="C:cytoplasm"/>
    <property type="evidence" value="ECO:0007669"/>
    <property type="project" value="UniProtKB-SubCell"/>
</dbReference>
<dbReference type="GO" id="GO:0009379">
    <property type="term" value="C:Holliday junction helicase complex"/>
    <property type="evidence" value="ECO:0007669"/>
    <property type="project" value="InterPro"/>
</dbReference>
<dbReference type="GO" id="GO:0048476">
    <property type="term" value="C:Holliday junction resolvase complex"/>
    <property type="evidence" value="ECO:0007669"/>
    <property type="project" value="UniProtKB-UniRule"/>
</dbReference>
<dbReference type="GO" id="GO:0005524">
    <property type="term" value="F:ATP binding"/>
    <property type="evidence" value="ECO:0007669"/>
    <property type="project" value="InterPro"/>
</dbReference>
<dbReference type="GO" id="GO:0000400">
    <property type="term" value="F:four-way junction DNA binding"/>
    <property type="evidence" value="ECO:0007669"/>
    <property type="project" value="UniProtKB-UniRule"/>
</dbReference>
<dbReference type="GO" id="GO:0009378">
    <property type="term" value="F:four-way junction helicase activity"/>
    <property type="evidence" value="ECO:0007669"/>
    <property type="project" value="InterPro"/>
</dbReference>
<dbReference type="GO" id="GO:0006310">
    <property type="term" value="P:DNA recombination"/>
    <property type="evidence" value="ECO:0007669"/>
    <property type="project" value="UniProtKB-UniRule"/>
</dbReference>
<dbReference type="GO" id="GO:0006281">
    <property type="term" value="P:DNA repair"/>
    <property type="evidence" value="ECO:0007669"/>
    <property type="project" value="UniProtKB-UniRule"/>
</dbReference>
<dbReference type="CDD" id="cd14332">
    <property type="entry name" value="UBA_RuvA_C"/>
    <property type="match status" value="1"/>
</dbReference>
<dbReference type="Gene3D" id="1.10.150.20">
    <property type="entry name" value="5' to 3' exonuclease, C-terminal subdomain"/>
    <property type="match status" value="1"/>
</dbReference>
<dbReference type="Gene3D" id="1.10.8.10">
    <property type="entry name" value="DNA helicase RuvA subunit, C-terminal domain"/>
    <property type="match status" value="1"/>
</dbReference>
<dbReference type="Gene3D" id="2.40.50.140">
    <property type="entry name" value="Nucleic acid-binding proteins"/>
    <property type="match status" value="1"/>
</dbReference>
<dbReference type="HAMAP" id="MF_00031">
    <property type="entry name" value="DNA_HJ_migration_RuvA"/>
    <property type="match status" value="1"/>
</dbReference>
<dbReference type="InterPro" id="IPR013849">
    <property type="entry name" value="DNA_helicase_Holl-junc_RuvA_I"/>
</dbReference>
<dbReference type="InterPro" id="IPR003583">
    <property type="entry name" value="Hlx-hairpin-Hlx_DNA-bd_motif"/>
</dbReference>
<dbReference type="InterPro" id="IPR012340">
    <property type="entry name" value="NA-bd_OB-fold"/>
</dbReference>
<dbReference type="InterPro" id="IPR000085">
    <property type="entry name" value="RuvA"/>
</dbReference>
<dbReference type="InterPro" id="IPR010994">
    <property type="entry name" value="RuvA_2-like"/>
</dbReference>
<dbReference type="InterPro" id="IPR011114">
    <property type="entry name" value="RuvA_C"/>
</dbReference>
<dbReference type="InterPro" id="IPR036267">
    <property type="entry name" value="RuvA_C_sf"/>
</dbReference>
<dbReference type="NCBIfam" id="TIGR00084">
    <property type="entry name" value="ruvA"/>
    <property type="match status" value="1"/>
</dbReference>
<dbReference type="Pfam" id="PF14520">
    <property type="entry name" value="HHH_5"/>
    <property type="match status" value="1"/>
</dbReference>
<dbReference type="Pfam" id="PF07499">
    <property type="entry name" value="RuvA_C"/>
    <property type="match status" value="1"/>
</dbReference>
<dbReference type="Pfam" id="PF01330">
    <property type="entry name" value="RuvA_N"/>
    <property type="match status" value="1"/>
</dbReference>
<dbReference type="SMART" id="SM00278">
    <property type="entry name" value="HhH1"/>
    <property type="match status" value="2"/>
</dbReference>
<dbReference type="SUPFAM" id="SSF46929">
    <property type="entry name" value="DNA helicase RuvA subunit, C-terminal domain"/>
    <property type="match status" value="1"/>
</dbReference>
<dbReference type="SUPFAM" id="SSF50249">
    <property type="entry name" value="Nucleic acid-binding proteins"/>
    <property type="match status" value="1"/>
</dbReference>
<dbReference type="SUPFAM" id="SSF47781">
    <property type="entry name" value="RuvA domain 2-like"/>
    <property type="match status" value="1"/>
</dbReference>
<sequence length="197" mass="21210">MFEYLNGKLVKISPTNIVIDLSGIGYLISVANPYAWSALMNTEVKIYVHQVIREDAHSLYGFVNESEKALFLRLISVSGIGPKSALAIIAAADNEGLINAIDNSDIKYLTKFPGVGKKTAMQMVLDLAGKFDATGAVGISLLDAAPASNLALEEAIEALQALGYKATELKKIEKKLAQEAGLTSEEYIKSALKLMMK</sequence>
<organism>
    <name type="scientific">Lactococcus lactis subsp. cremoris (strain MG1363)</name>
    <dbReference type="NCBI Taxonomy" id="416870"/>
    <lineage>
        <taxon>Bacteria</taxon>
        <taxon>Bacillati</taxon>
        <taxon>Bacillota</taxon>
        <taxon>Bacilli</taxon>
        <taxon>Lactobacillales</taxon>
        <taxon>Streptococcaceae</taxon>
        <taxon>Lactococcus</taxon>
        <taxon>Lactococcus cremoris subsp. cremoris</taxon>
    </lineage>
</organism>
<keyword id="KW-0963">Cytoplasm</keyword>
<keyword id="KW-0227">DNA damage</keyword>
<keyword id="KW-0233">DNA recombination</keyword>
<keyword id="KW-0234">DNA repair</keyword>
<keyword id="KW-0238">DNA-binding</keyword>
<accession>A2RP07</accession>